<gene>
    <name evidence="1" type="primary">dtd</name>
    <name type="ordered locus">ECP_4096</name>
</gene>
<sequence length="145" mass="15950">MIALIQRVTRASVTVEGEVTGEIGAGLLVLLGVEKDDDEQKANRLCERVLGYRIFSDAEGKMNLNVQQAGGSVLVVSQFTLAADTERGMRPSFSKGASPDRAEALYDYFVERCRQQEMNTQTGRFAADMQVSLVNDGPVTFWLQV</sequence>
<name>DTD_ECOL5</name>
<proteinExistence type="inferred from homology"/>
<feature type="chain" id="PRO_0000259282" description="D-aminoacyl-tRNA deacylase">
    <location>
        <begin position="1"/>
        <end position="145"/>
    </location>
</feature>
<feature type="short sequence motif" description="Gly-cisPro motif, important for rejection of L-amino acids" evidence="1">
    <location>
        <begin position="137"/>
        <end position="138"/>
    </location>
</feature>
<organism>
    <name type="scientific">Escherichia coli O6:K15:H31 (strain 536 / UPEC)</name>
    <dbReference type="NCBI Taxonomy" id="362663"/>
    <lineage>
        <taxon>Bacteria</taxon>
        <taxon>Pseudomonadati</taxon>
        <taxon>Pseudomonadota</taxon>
        <taxon>Gammaproteobacteria</taxon>
        <taxon>Enterobacterales</taxon>
        <taxon>Enterobacteriaceae</taxon>
        <taxon>Escherichia</taxon>
    </lineage>
</organism>
<protein>
    <recommendedName>
        <fullName evidence="1">D-aminoacyl-tRNA deacylase</fullName>
        <shortName evidence="1">DTD</shortName>
        <ecNumber evidence="1">3.1.1.96</ecNumber>
    </recommendedName>
    <alternativeName>
        <fullName evidence="1">Gly-tRNA(Ala) deacylase</fullName>
    </alternativeName>
</protein>
<reference key="1">
    <citation type="journal article" date="2006" name="Mol. Microbiol.">
        <title>Role of pathogenicity island-associated integrases in the genome plasticity of uropathogenic Escherichia coli strain 536.</title>
        <authorList>
            <person name="Hochhut B."/>
            <person name="Wilde C."/>
            <person name="Balling G."/>
            <person name="Middendorf B."/>
            <person name="Dobrindt U."/>
            <person name="Brzuszkiewicz E."/>
            <person name="Gottschalk G."/>
            <person name="Carniel E."/>
            <person name="Hacker J."/>
        </authorList>
    </citation>
    <scope>NUCLEOTIDE SEQUENCE [LARGE SCALE GENOMIC DNA]</scope>
    <source>
        <strain>536 / UPEC</strain>
    </source>
</reference>
<comment type="function">
    <text evidence="1">An aminoacyl-tRNA editing enzyme that deacylates mischarged D-aminoacyl-tRNAs. Also deacylates mischarged glycyl-tRNA(Ala), protecting cells against glycine mischarging by AlaRS. Acts via tRNA-based rather than protein-based catalysis; rejects L-amino acids rather than detecting D-amino acids in the active site. By recycling D-aminoacyl-tRNA to D-amino acids and free tRNA molecules, this enzyme counteracts the toxicity associated with the formation of D-aminoacyl-tRNA entities in vivo and helps enforce protein L-homochirality.</text>
</comment>
<comment type="catalytic activity">
    <reaction evidence="1">
        <text>glycyl-tRNA(Ala) + H2O = tRNA(Ala) + glycine + H(+)</text>
        <dbReference type="Rhea" id="RHEA:53744"/>
        <dbReference type="Rhea" id="RHEA-COMP:9657"/>
        <dbReference type="Rhea" id="RHEA-COMP:13640"/>
        <dbReference type="ChEBI" id="CHEBI:15377"/>
        <dbReference type="ChEBI" id="CHEBI:15378"/>
        <dbReference type="ChEBI" id="CHEBI:57305"/>
        <dbReference type="ChEBI" id="CHEBI:78442"/>
        <dbReference type="ChEBI" id="CHEBI:78522"/>
        <dbReference type="EC" id="3.1.1.96"/>
    </reaction>
</comment>
<comment type="catalytic activity">
    <reaction evidence="1">
        <text>a D-aminoacyl-tRNA + H2O = a tRNA + a D-alpha-amino acid + H(+)</text>
        <dbReference type="Rhea" id="RHEA:13953"/>
        <dbReference type="Rhea" id="RHEA-COMP:10123"/>
        <dbReference type="Rhea" id="RHEA-COMP:10124"/>
        <dbReference type="ChEBI" id="CHEBI:15377"/>
        <dbReference type="ChEBI" id="CHEBI:15378"/>
        <dbReference type="ChEBI" id="CHEBI:59871"/>
        <dbReference type="ChEBI" id="CHEBI:78442"/>
        <dbReference type="ChEBI" id="CHEBI:79333"/>
        <dbReference type="EC" id="3.1.1.96"/>
    </reaction>
</comment>
<comment type="subunit">
    <text evidence="1">Homodimer.</text>
</comment>
<comment type="subcellular location">
    <subcellularLocation>
        <location evidence="1">Cytoplasm</location>
    </subcellularLocation>
</comment>
<comment type="domain">
    <text evidence="1">A Gly-cisPro motif from one monomer fits into the active site of the other monomer to allow specific chiral rejection of L-amino acids.</text>
</comment>
<comment type="similarity">
    <text evidence="1">Belongs to the DTD family.</text>
</comment>
<accession>Q0TAH5</accession>
<keyword id="KW-0963">Cytoplasm</keyword>
<keyword id="KW-0378">Hydrolase</keyword>
<keyword id="KW-0694">RNA-binding</keyword>
<keyword id="KW-0820">tRNA-binding</keyword>
<dbReference type="EC" id="3.1.1.96" evidence="1"/>
<dbReference type="EMBL" id="CP000247">
    <property type="protein sequence ID" value="ABG72054.1"/>
    <property type="molecule type" value="Genomic_DNA"/>
</dbReference>
<dbReference type="RefSeq" id="WP_000560983.1">
    <property type="nucleotide sequence ID" value="NC_008253.1"/>
</dbReference>
<dbReference type="SMR" id="Q0TAH5"/>
<dbReference type="GeneID" id="93778051"/>
<dbReference type="KEGG" id="ecp:ECP_4096"/>
<dbReference type="HOGENOM" id="CLU_076901_1_0_6"/>
<dbReference type="Proteomes" id="UP000009182">
    <property type="component" value="Chromosome"/>
</dbReference>
<dbReference type="GO" id="GO:0005737">
    <property type="term" value="C:cytoplasm"/>
    <property type="evidence" value="ECO:0007669"/>
    <property type="project" value="UniProtKB-SubCell"/>
</dbReference>
<dbReference type="GO" id="GO:0051500">
    <property type="term" value="F:D-tyrosyl-tRNA(Tyr) deacylase activity"/>
    <property type="evidence" value="ECO:0007669"/>
    <property type="project" value="TreeGrafter"/>
</dbReference>
<dbReference type="GO" id="GO:0106026">
    <property type="term" value="F:Gly-tRNA(Ala) deacylase activity"/>
    <property type="evidence" value="ECO:0007669"/>
    <property type="project" value="UniProtKB-UniRule"/>
</dbReference>
<dbReference type="GO" id="GO:0043908">
    <property type="term" value="F:Ser(Gly)-tRNA(Ala) hydrolase activity"/>
    <property type="evidence" value="ECO:0007669"/>
    <property type="project" value="UniProtKB-UniRule"/>
</dbReference>
<dbReference type="GO" id="GO:0000049">
    <property type="term" value="F:tRNA binding"/>
    <property type="evidence" value="ECO:0007669"/>
    <property type="project" value="UniProtKB-UniRule"/>
</dbReference>
<dbReference type="GO" id="GO:0019478">
    <property type="term" value="P:D-amino acid catabolic process"/>
    <property type="evidence" value="ECO:0007669"/>
    <property type="project" value="UniProtKB-UniRule"/>
</dbReference>
<dbReference type="CDD" id="cd00563">
    <property type="entry name" value="Dtyr_deacylase"/>
    <property type="match status" value="1"/>
</dbReference>
<dbReference type="FunFam" id="3.50.80.10:FF:000001">
    <property type="entry name" value="D-aminoacyl-tRNA deacylase"/>
    <property type="match status" value="1"/>
</dbReference>
<dbReference type="Gene3D" id="3.50.80.10">
    <property type="entry name" value="D-tyrosyl-tRNA(Tyr) deacylase"/>
    <property type="match status" value="1"/>
</dbReference>
<dbReference type="HAMAP" id="MF_00518">
    <property type="entry name" value="Deacylase_Dtd"/>
    <property type="match status" value="1"/>
</dbReference>
<dbReference type="InterPro" id="IPR003732">
    <property type="entry name" value="Daa-tRNA_deacyls_DTD"/>
</dbReference>
<dbReference type="InterPro" id="IPR023509">
    <property type="entry name" value="DTD-like_sf"/>
</dbReference>
<dbReference type="NCBIfam" id="TIGR00256">
    <property type="entry name" value="D-aminoacyl-tRNA deacylase"/>
    <property type="match status" value="1"/>
</dbReference>
<dbReference type="PANTHER" id="PTHR10472:SF5">
    <property type="entry name" value="D-AMINOACYL-TRNA DEACYLASE 1"/>
    <property type="match status" value="1"/>
</dbReference>
<dbReference type="PANTHER" id="PTHR10472">
    <property type="entry name" value="D-TYROSYL-TRNA TYR DEACYLASE"/>
    <property type="match status" value="1"/>
</dbReference>
<dbReference type="Pfam" id="PF02580">
    <property type="entry name" value="Tyr_Deacylase"/>
    <property type="match status" value="1"/>
</dbReference>
<dbReference type="SUPFAM" id="SSF69500">
    <property type="entry name" value="DTD-like"/>
    <property type="match status" value="1"/>
</dbReference>
<evidence type="ECO:0000255" key="1">
    <source>
        <dbReference type="HAMAP-Rule" id="MF_00518"/>
    </source>
</evidence>